<feature type="chain" id="PRO_0000194350" description="Agmatine deiminase">
    <location>
        <begin position="1"/>
        <end position="383"/>
    </location>
</feature>
<feature type="active site" description="Amidino-cysteine intermediate" evidence="2">
    <location>
        <position position="366"/>
    </location>
</feature>
<feature type="binding site" evidence="1">
    <location>
        <position position="220"/>
    </location>
    <ligand>
        <name>agmatine</name>
        <dbReference type="ChEBI" id="CHEBI:58145"/>
    </ligand>
</feature>
<feature type="binding site" evidence="1">
    <location>
        <position position="226"/>
    </location>
    <ligand>
        <name>agmatine</name>
        <dbReference type="ChEBI" id="CHEBI:58145"/>
    </ligand>
</feature>
<feature type="mutagenesis site" description="Impairs enzyme activity but does not abolish it." evidence="3">
    <original>C</original>
    <variation>A</variation>
    <location>
        <position position="180"/>
    </location>
</feature>
<feature type="mutagenesis site" description="No effect." evidence="3">
    <original>C</original>
    <variation>A</variation>
    <location>
        <position position="229"/>
    </location>
</feature>
<feature type="mutagenesis site" description="No effect." evidence="3">
    <original>C</original>
    <variation>A</variation>
    <location>
        <position position="230"/>
    </location>
</feature>
<feature type="mutagenesis site" description="Impairs enzyme activity but does not abolish it." evidence="3">
    <original>C</original>
    <variation>A</variation>
    <location>
        <position position="366"/>
    </location>
</feature>
<feature type="sequence conflict" description="In Ref. 3; BAC43189 and 4; AAO63405." evidence="6" ref="3 4">
    <original>D</original>
    <variation>G</variation>
    <location>
        <position position="49"/>
    </location>
</feature>
<feature type="sequence conflict" description="In Ref. 5; BAB59127." evidence="6" ref="5">
    <original>P</original>
    <variation>L</variation>
    <location>
        <position position="59"/>
    </location>
</feature>
<feature type="sequence conflict" description="In Ref. 5; BAB59127." evidence="6" ref="5">
    <original>G</original>
    <variation>V</variation>
    <location>
        <position position="126"/>
    </location>
</feature>
<feature type="helix" evidence="9">
    <location>
        <begin position="9"/>
        <end position="11"/>
    </location>
</feature>
<feature type="strand" evidence="9">
    <location>
        <begin position="22"/>
        <end position="27"/>
    </location>
</feature>
<feature type="turn" evidence="9">
    <location>
        <begin position="33"/>
        <end position="35"/>
    </location>
</feature>
<feature type="helix" evidence="9">
    <location>
        <begin position="38"/>
        <end position="40"/>
    </location>
</feature>
<feature type="helix" evidence="9">
    <location>
        <begin position="41"/>
        <end position="55"/>
    </location>
</feature>
<feature type="strand" evidence="9">
    <location>
        <begin position="60"/>
        <end position="64"/>
    </location>
</feature>
<feature type="helix" evidence="9">
    <location>
        <begin position="66"/>
        <end position="68"/>
    </location>
</feature>
<feature type="helix" evidence="9">
    <location>
        <begin position="69"/>
        <end position="75"/>
    </location>
</feature>
<feature type="strand" evidence="9">
    <location>
        <begin position="80"/>
        <end position="84"/>
    </location>
</feature>
<feature type="helix" evidence="9">
    <location>
        <begin position="92"/>
        <end position="95"/>
    </location>
</feature>
<feature type="strand" evidence="9">
    <location>
        <begin position="98"/>
        <end position="101"/>
    </location>
</feature>
<feature type="strand" evidence="9">
    <location>
        <begin position="114"/>
        <end position="121"/>
    </location>
</feature>
<feature type="turn" evidence="9">
    <location>
        <begin position="124"/>
        <end position="126"/>
    </location>
</feature>
<feature type="helix" evidence="9">
    <location>
        <begin position="127"/>
        <end position="130"/>
    </location>
</feature>
<feature type="strand" evidence="9">
    <location>
        <begin position="132"/>
        <end position="134"/>
    </location>
</feature>
<feature type="helix" evidence="9">
    <location>
        <begin position="139"/>
        <end position="141"/>
    </location>
</feature>
<feature type="helix" evidence="9">
    <location>
        <begin position="142"/>
        <end position="150"/>
    </location>
</feature>
<feature type="strand" evidence="9">
    <location>
        <begin position="154"/>
        <end position="160"/>
    </location>
</feature>
<feature type="helix" evidence="9">
    <location>
        <begin position="163"/>
        <end position="165"/>
    </location>
</feature>
<feature type="strand" evidence="9">
    <location>
        <begin position="166"/>
        <end position="168"/>
    </location>
</feature>
<feature type="strand" evidence="9">
    <location>
        <begin position="170"/>
        <end position="177"/>
    </location>
</feature>
<feature type="helix" evidence="9">
    <location>
        <begin position="178"/>
        <end position="181"/>
    </location>
</feature>
<feature type="turn" evidence="9">
    <location>
        <begin position="184"/>
        <end position="186"/>
    </location>
</feature>
<feature type="helix" evidence="9">
    <location>
        <begin position="192"/>
        <end position="203"/>
    </location>
</feature>
<feature type="strand" evidence="9">
    <location>
        <begin position="207"/>
        <end position="212"/>
    </location>
</feature>
<feature type="helix" evidence="9">
    <location>
        <begin position="219"/>
        <end position="221"/>
    </location>
</feature>
<feature type="helix" evidence="9">
    <location>
        <begin position="225"/>
        <end position="227"/>
    </location>
</feature>
<feature type="strand" evidence="9">
    <location>
        <begin position="229"/>
        <end position="233"/>
    </location>
</feature>
<feature type="strand" evidence="9">
    <location>
        <begin position="236"/>
        <end position="241"/>
    </location>
</feature>
<feature type="helix" evidence="9">
    <location>
        <begin position="249"/>
        <end position="261"/>
    </location>
</feature>
<feature type="strand" evidence="9">
    <location>
        <begin position="272"/>
        <end position="277"/>
    </location>
</feature>
<feature type="helix" evidence="9">
    <location>
        <begin position="286"/>
        <end position="290"/>
    </location>
</feature>
<feature type="strand" evidence="9">
    <location>
        <begin position="296"/>
        <end position="298"/>
    </location>
</feature>
<feature type="strand" evidence="9">
    <location>
        <begin position="315"/>
        <end position="317"/>
    </location>
</feature>
<feature type="strand" evidence="9">
    <location>
        <begin position="320"/>
        <end position="324"/>
    </location>
</feature>
<feature type="helix" evidence="9">
    <location>
        <begin position="331"/>
        <end position="342"/>
    </location>
</feature>
<feature type="strand" evidence="9">
    <location>
        <begin position="346"/>
        <end position="351"/>
    </location>
</feature>
<feature type="turn" evidence="9">
    <location>
        <begin position="352"/>
        <end position="354"/>
    </location>
</feature>
<feature type="helix" evidence="9">
    <location>
        <begin position="355"/>
        <end position="358"/>
    </location>
</feature>
<feature type="turn" evidence="9">
    <location>
        <begin position="359"/>
        <end position="361"/>
    </location>
</feature>
<feature type="helix" evidence="9">
    <location>
        <begin position="364"/>
        <end position="367"/>
    </location>
</feature>
<feature type="strand" evidence="9">
    <location>
        <begin position="368"/>
        <end position="372"/>
    </location>
</feature>
<organism>
    <name type="scientific">Arabidopsis thaliana</name>
    <name type="common">Mouse-ear cress</name>
    <dbReference type="NCBI Taxonomy" id="3702"/>
    <lineage>
        <taxon>Eukaryota</taxon>
        <taxon>Viridiplantae</taxon>
        <taxon>Streptophyta</taxon>
        <taxon>Embryophyta</taxon>
        <taxon>Tracheophyta</taxon>
        <taxon>Spermatophyta</taxon>
        <taxon>Magnoliopsida</taxon>
        <taxon>eudicotyledons</taxon>
        <taxon>Gunneridae</taxon>
        <taxon>Pentapetalae</taxon>
        <taxon>rosids</taxon>
        <taxon>malvids</taxon>
        <taxon>Brassicales</taxon>
        <taxon>Brassicaceae</taxon>
        <taxon>Camelineae</taxon>
        <taxon>Arabidopsis</taxon>
    </lineage>
</organism>
<gene>
    <name type="primary">AIH</name>
    <name type="synonym">EMB1873</name>
    <name type="ordered locus">At5g08170</name>
    <name type="ORF">T22D6.110</name>
</gene>
<accession>Q8GWW7</accession>
<accession>Q94IC7</accession>
<accession>Q9LEZ0</accession>
<protein>
    <recommendedName>
        <fullName>Agmatine deiminase</fullName>
        <ecNumber evidence="3 4">3.5.3.12</ecNumber>
    </recommendedName>
    <alternativeName>
        <fullName>Agmatine iminohydrolase</fullName>
    </alternativeName>
    <alternativeName>
        <fullName>Protein EMBRYO DEFECTIVE 1873</fullName>
    </alternativeName>
</protein>
<proteinExistence type="evidence at protein level"/>
<reference key="1">
    <citation type="journal article" date="2000" name="Nature">
        <title>Sequence and analysis of chromosome 5 of the plant Arabidopsis thaliana.</title>
        <authorList>
            <person name="Tabata S."/>
            <person name="Kaneko T."/>
            <person name="Nakamura Y."/>
            <person name="Kotani H."/>
            <person name="Kato T."/>
            <person name="Asamizu E."/>
            <person name="Miyajima N."/>
            <person name="Sasamoto S."/>
            <person name="Kimura T."/>
            <person name="Hosouchi T."/>
            <person name="Kawashima K."/>
            <person name="Kohara M."/>
            <person name="Matsumoto M."/>
            <person name="Matsuno A."/>
            <person name="Muraki A."/>
            <person name="Nakayama S."/>
            <person name="Nakazaki N."/>
            <person name="Naruo K."/>
            <person name="Okumura S."/>
            <person name="Shinpo S."/>
            <person name="Takeuchi C."/>
            <person name="Wada T."/>
            <person name="Watanabe A."/>
            <person name="Yamada M."/>
            <person name="Yasuda M."/>
            <person name="Sato S."/>
            <person name="de la Bastide M."/>
            <person name="Huang E."/>
            <person name="Spiegel L."/>
            <person name="Gnoj L."/>
            <person name="O'Shaughnessy A."/>
            <person name="Preston R."/>
            <person name="Habermann K."/>
            <person name="Murray J."/>
            <person name="Johnson D."/>
            <person name="Rohlfing T."/>
            <person name="Nelson J."/>
            <person name="Stoneking T."/>
            <person name="Pepin K."/>
            <person name="Spieth J."/>
            <person name="Sekhon M."/>
            <person name="Armstrong J."/>
            <person name="Becker M."/>
            <person name="Belter E."/>
            <person name="Cordum H."/>
            <person name="Cordes M."/>
            <person name="Courtney L."/>
            <person name="Courtney W."/>
            <person name="Dante M."/>
            <person name="Du H."/>
            <person name="Edwards J."/>
            <person name="Fryman J."/>
            <person name="Haakensen B."/>
            <person name="Lamar E."/>
            <person name="Latreille P."/>
            <person name="Leonard S."/>
            <person name="Meyer R."/>
            <person name="Mulvaney E."/>
            <person name="Ozersky P."/>
            <person name="Riley A."/>
            <person name="Strowmatt C."/>
            <person name="Wagner-McPherson C."/>
            <person name="Wollam A."/>
            <person name="Yoakum M."/>
            <person name="Bell M."/>
            <person name="Dedhia N."/>
            <person name="Parnell L."/>
            <person name="Shah R."/>
            <person name="Rodriguez M."/>
            <person name="Hoon See L."/>
            <person name="Vil D."/>
            <person name="Baker J."/>
            <person name="Kirchoff K."/>
            <person name="Toth K."/>
            <person name="King L."/>
            <person name="Bahret A."/>
            <person name="Miller B."/>
            <person name="Marra M.A."/>
            <person name="Martienssen R."/>
            <person name="McCombie W.R."/>
            <person name="Wilson R.K."/>
            <person name="Murphy G."/>
            <person name="Bancroft I."/>
            <person name="Volckaert G."/>
            <person name="Wambutt R."/>
            <person name="Duesterhoeft A."/>
            <person name="Stiekema W."/>
            <person name="Pohl T."/>
            <person name="Entian K.-D."/>
            <person name="Terryn N."/>
            <person name="Hartley N."/>
            <person name="Bent E."/>
            <person name="Johnson S."/>
            <person name="Langham S.-A."/>
            <person name="McCullagh B."/>
            <person name="Robben J."/>
            <person name="Grymonprez B."/>
            <person name="Zimmermann W."/>
            <person name="Ramsperger U."/>
            <person name="Wedler H."/>
            <person name="Balke K."/>
            <person name="Wedler E."/>
            <person name="Peters S."/>
            <person name="van Staveren M."/>
            <person name="Dirkse W."/>
            <person name="Mooijman P."/>
            <person name="Klein Lankhorst R."/>
            <person name="Weitzenegger T."/>
            <person name="Bothe G."/>
            <person name="Rose M."/>
            <person name="Hauf J."/>
            <person name="Berneiser S."/>
            <person name="Hempel S."/>
            <person name="Feldpausch M."/>
            <person name="Lamberth S."/>
            <person name="Villarroel R."/>
            <person name="Gielen J."/>
            <person name="Ardiles W."/>
            <person name="Bents O."/>
            <person name="Lemcke K."/>
            <person name="Kolesov G."/>
            <person name="Mayer K.F.X."/>
            <person name="Rudd S."/>
            <person name="Schoof H."/>
            <person name="Schueller C."/>
            <person name="Zaccaria P."/>
            <person name="Mewes H.-W."/>
            <person name="Bevan M."/>
            <person name="Fransz P.F."/>
        </authorList>
    </citation>
    <scope>NUCLEOTIDE SEQUENCE [LARGE SCALE GENOMIC DNA]</scope>
    <source>
        <strain>cv. Columbia</strain>
    </source>
</reference>
<reference key="2">
    <citation type="journal article" date="2017" name="Plant J.">
        <title>Araport11: a complete reannotation of the Arabidopsis thaliana reference genome.</title>
        <authorList>
            <person name="Cheng C.Y."/>
            <person name="Krishnakumar V."/>
            <person name="Chan A.P."/>
            <person name="Thibaud-Nissen F."/>
            <person name="Schobel S."/>
            <person name="Town C.D."/>
        </authorList>
    </citation>
    <scope>GENOME REANNOTATION</scope>
    <source>
        <strain>cv. Columbia</strain>
    </source>
</reference>
<reference key="3">
    <citation type="journal article" date="2002" name="Science">
        <title>Functional annotation of a full-length Arabidopsis cDNA collection.</title>
        <authorList>
            <person name="Seki M."/>
            <person name="Narusaka M."/>
            <person name="Kamiya A."/>
            <person name="Ishida J."/>
            <person name="Satou M."/>
            <person name="Sakurai T."/>
            <person name="Nakajima M."/>
            <person name="Enju A."/>
            <person name="Akiyama K."/>
            <person name="Oono Y."/>
            <person name="Muramatsu M."/>
            <person name="Hayashizaki Y."/>
            <person name="Kawai J."/>
            <person name="Carninci P."/>
            <person name="Itoh M."/>
            <person name="Ishii Y."/>
            <person name="Arakawa T."/>
            <person name="Shibata K."/>
            <person name="Shinagawa A."/>
            <person name="Shinozaki K."/>
        </authorList>
    </citation>
    <scope>NUCLEOTIDE SEQUENCE [LARGE SCALE MRNA]</scope>
    <source>
        <strain>cv. Columbia</strain>
    </source>
</reference>
<reference key="4">
    <citation type="journal article" date="2003" name="Science">
        <title>Empirical analysis of transcriptional activity in the Arabidopsis genome.</title>
        <authorList>
            <person name="Yamada K."/>
            <person name="Lim J."/>
            <person name="Dale J.M."/>
            <person name="Chen H."/>
            <person name="Shinn P."/>
            <person name="Palm C.J."/>
            <person name="Southwick A.M."/>
            <person name="Wu H.C."/>
            <person name="Kim C.J."/>
            <person name="Nguyen M."/>
            <person name="Pham P.K."/>
            <person name="Cheuk R.F."/>
            <person name="Karlin-Newmann G."/>
            <person name="Liu S.X."/>
            <person name="Lam B."/>
            <person name="Sakano H."/>
            <person name="Wu T."/>
            <person name="Yu G."/>
            <person name="Miranda M."/>
            <person name="Quach H.L."/>
            <person name="Tripp M."/>
            <person name="Chang C.H."/>
            <person name="Lee J.M."/>
            <person name="Toriumi M.J."/>
            <person name="Chan M.M."/>
            <person name="Tang C.C."/>
            <person name="Onodera C.S."/>
            <person name="Deng J.M."/>
            <person name="Akiyama K."/>
            <person name="Ansari Y."/>
            <person name="Arakawa T."/>
            <person name="Banh J."/>
            <person name="Banno F."/>
            <person name="Bowser L."/>
            <person name="Brooks S.Y."/>
            <person name="Carninci P."/>
            <person name="Chao Q."/>
            <person name="Choy N."/>
            <person name="Enju A."/>
            <person name="Goldsmith A.D."/>
            <person name="Gurjal M."/>
            <person name="Hansen N.F."/>
            <person name="Hayashizaki Y."/>
            <person name="Johnson-Hopson C."/>
            <person name="Hsuan V.W."/>
            <person name="Iida K."/>
            <person name="Karnes M."/>
            <person name="Khan S."/>
            <person name="Koesema E."/>
            <person name="Ishida J."/>
            <person name="Jiang P.X."/>
            <person name="Jones T."/>
            <person name="Kawai J."/>
            <person name="Kamiya A."/>
            <person name="Meyers C."/>
            <person name="Nakajima M."/>
            <person name="Narusaka M."/>
            <person name="Seki M."/>
            <person name="Sakurai T."/>
            <person name="Satou M."/>
            <person name="Tamse R."/>
            <person name="Vaysberg M."/>
            <person name="Wallender E.K."/>
            <person name="Wong C."/>
            <person name="Yamamura Y."/>
            <person name="Yuan S."/>
            <person name="Shinozaki K."/>
            <person name="Davis R.W."/>
            <person name="Theologis A."/>
            <person name="Ecker J.R."/>
        </authorList>
    </citation>
    <scope>NUCLEOTIDE SEQUENCE [LARGE SCALE MRNA]</scope>
    <source>
        <strain>cv. Columbia</strain>
    </source>
</reference>
<reference key="5">
    <citation type="submission" date="2001-06" db="EMBL/GenBank/DDBJ databases">
        <title>Partial Arabidopsis thaliana cDNA encoding a protein of unknown function.</title>
        <authorList>
            <person name="Kimura K."/>
            <person name="Nakada Y."/>
            <person name="Itoh Y."/>
        </authorList>
    </citation>
    <scope>NUCLEOTIDE SEQUENCE [MRNA] OF 5-383</scope>
</reference>
<reference key="6">
    <citation type="journal article" date="2003" name="FEBS Lett.">
        <title>Identification and characterization of plant agmatine iminohydrolase, the last missing link in polyamine biosynthesis of plants.</title>
        <authorList>
            <person name="Janowitz T."/>
            <person name="Kneifel H."/>
            <person name="Piotrowski M."/>
        </authorList>
    </citation>
    <scope>FUNCTION</scope>
    <scope>CATALYTIC ACTIVITY</scope>
    <scope>BIOPHYSICOCHEMICAL PROPERTIES</scope>
    <scope>SUBUNIT</scope>
    <scope>ACTIVITY REGULATION</scope>
    <scope>MUTAGENESIS OF CYS-180; CYS-229; CYS-230 AND CYS-366</scope>
</reference>
<reference key="7">
    <citation type="journal article" date="2003" name="FEBS Lett.">
        <title>The diverse bacterial origins of the Arabidopsis polyamine biosynthetic pathway.</title>
        <authorList>
            <person name="Illingworth C."/>
            <person name="Mayer M.J."/>
            <person name="Elliott K."/>
            <person name="Hanfrey C."/>
            <person name="Walton N.J."/>
            <person name="Michael A.J."/>
        </authorList>
    </citation>
    <scope>FUNCTION</scope>
    <scope>CATALYTIC ACTIVITY</scope>
</reference>
<reference key="8">
    <citation type="submission" date="2004-08" db="PDB data bank">
        <title>X-ray structure of gene product from Arabidopsis thaliana At5g08170, agmatine iminohydrolase.</title>
        <authorList>
            <person name="Wesenberg G.E."/>
            <person name="Smith D.W."/>
            <person name="Phillips G.N. Jr."/>
            <person name="Bingman C.A."/>
            <person name="Allard S.T.M."/>
        </authorList>
    </citation>
    <scope>X-RAY CRYSTALLOGRAPHY (1.53 ANGSTROMS) OF 2-383</scope>
</reference>
<reference key="9">
    <citation type="journal article" date="2007" name="Structure">
        <title>Ensemble refinement of protein crystal structures: validation and application.</title>
        <authorList>
            <person name="Levin E.J."/>
            <person name="Kondrashov D.A."/>
            <person name="Wesenberg G.E."/>
            <person name="Phillips G.N. Jr."/>
        </authorList>
    </citation>
    <scope>X-RAY CRYSTALLOGRAPHY (1.53 ANGSTROMS)</scope>
    <scope>SUBUNIT</scope>
</reference>
<evidence type="ECO:0000250" key="1">
    <source>
        <dbReference type="UniProtKB" id="G7JT50"/>
    </source>
</evidence>
<evidence type="ECO:0000250" key="2">
    <source>
        <dbReference type="UniProtKB" id="Q837U5"/>
    </source>
</evidence>
<evidence type="ECO:0000269" key="3">
    <source>
    </source>
</evidence>
<evidence type="ECO:0000269" key="4">
    <source>
    </source>
</evidence>
<evidence type="ECO:0000269" key="5">
    <source>
    </source>
</evidence>
<evidence type="ECO:0000305" key="6"/>
<evidence type="ECO:0000305" key="7">
    <source>
    </source>
</evidence>
<evidence type="ECO:0000305" key="8">
    <source>
    </source>
</evidence>
<evidence type="ECO:0007829" key="9">
    <source>
        <dbReference type="PDB" id="3H7C"/>
    </source>
</evidence>
<sequence>MEESRESPAEHGYYMPAEWDSHAQTWIGWPERQDNWRHNALPAQRVFADVAKAISKFEPVTVCASPAQWENARKQLPEDIRVVEMSMNDSWFRDSGPTFIVRKRPVKLSSLNRNIAGIDWNFNAWGGANDGCYNDWSHDLLVSRKILALERIPRFQHSMILEGGSIHVDGEGTCLVTEECLLNKNRNPHMSKEQIEEELKKYLGVQSFIWLPRGLYGDEDTNGHIDNMCCFARPGVVLLSWTDDETDPQYERSVEALSVLSNSIDARGRKIQVIKLYIPEPLYMTEEESSGITQDGEAIPRLAGTRLAASYVNFYIANGGIIAPQFGDPIRDKEAIRVLSDTFPHHSVVGIENAREIVLAGGNIHCITQQQPAEPTSVAENGH</sequence>
<name>AGUA_ARATH</name>
<comment type="function">
    <text evidence="7 8">Mediates the hydrolysis of agmatine into N-carbamoylputrescine in the arginine decarboxylase (ADC) pathway of putrescine biosynthesis, a basic polyamine.</text>
</comment>
<comment type="catalytic activity">
    <reaction evidence="3 4">
        <text>agmatine + H2O = N-carbamoylputrescine + NH4(+)</text>
        <dbReference type="Rhea" id="RHEA:18037"/>
        <dbReference type="ChEBI" id="CHEBI:15377"/>
        <dbReference type="ChEBI" id="CHEBI:28938"/>
        <dbReference type="ChEBI" id="CHEBI:58145"/>
        <dbReference type="ChEBI" id="CHEBI:58318"/>
        <dbReference type="EC" id="3.5.3.12"/>
    </reaction>
    <physiologicalReaction direction="left-to-right" evidence="3 4">
        <dbReference type="Rhea" id="RHEA:18038"/>
    </physiologicalReaction>
</comment>
<comment type="activity regulation">
    <text evidence="3">Inhibited by N-ethylmaleimide and iodoacetamide.</text>
</comment>
<comment type="biophysicochemical properties">
    <kinetics>
        <Vmax evidence="3">112.0 nmol/sec/mg enzyme with agmatine as substrate</Vmax>
    </kinetics>
    <phDependence>
        <text evidence="3">Optimum pH is 7.0.</text>
    </phDependence>
</comment>
<comment type="pathway">
    <text evidence="6">Amine and polyamine biosynthesis; putrescine biosynthesis via agmatine pathway; N-carbamoylputrescine from agmatine: step 1/1.</text>
</comment>
<comment type="subunit">
    <text evidence="3 5">Forms homodimers.</text>
</comment>
<comment type="similarity">
    <text evidence="6">Belongs to the agmatine deiminase family.</text>
</comment>
<keyword id="KW-0002">3D-structure</keyword>
<keyword id="KW-0378">Hydrolase</keyword>
<keyword id="KW-0620">Polyamine biosynthesis</keyword>
<keyword id="KW-1185">Reference proteome</keyword>
<dbReference type="EC" id="3.5.3.12" evidence="3 4"/>
<dbReference type="EMBL" id="AL357612">
    <property type="protein sequence ID" value="CAB93718.1"/>
    <property type="molecule type" value="Genomic_DNA"/>
</dbReference>
<dbReference type="EMBL" id="CP002688">
    <property type="protein sequence ID" value="AED91261.1"/>
    <property type="molecule type" value="Genomic_DNA"/>
</dbReference>
<dbReference type="EMBL" id="AK118589">
    <property type="protein sequence ID" value="BAC43189.1"/>
    <property type="molecule type" value="mRNA"/>
</dbReference>
<dbReference type="EMBL" id="BT005341">
    <property type="protein sequence ID" value="AAO63405.1"/>
    <property type="molecule type" value="mRNA"/>
</dbReference>
<dbReference type="EMBL" id="AB062682">
    <property type="protein sequence ID" value="BAB59127.1"/>
    <property type="molecule type" value="mRNA"/>
</dbReference>
<dbReference type="PIR" id="T50502">
    <property type="entry name" value="T50502"/>
</dbReference>
<dbReference type="RefSeq" id="NP_196434.1">
    <property type="nucleotide sequence ID" value="NM_120900.6"/>
</dbReference>
<dbReference type="PDB" id="1VKP">
    <property type="method" value="X-ray"/>
    <property type="resolution" value="1.53 A"/>
    <property type="chains" value="A/B=1-383"/>
</dbReference>
<dbReference type="PDB" id="2Q3U">
    <property type="method" value="X-ray"/>
    <property type="resolution" value="1.53 A"/>
    <property type="chains" value="A/B=1-383"/>
</dbReference>
<dbReference type="PDB" id="3H7C">
    <property type="method" value="X-ray"/>
    <property type="resolution" value="1.50 A"/>
    <property type="chains" value="X=2-383"/>
</dbReference>
<dbReference type="PDB" id="3H7K">
    <property type="method" value="X-ray"/>
    <property type="resolution" value="1.84 A"/>
    <property type="chains" value="A=2-383"/>
</dbReference>
<dbReference type="PDBsum" id="1VKP"/>
<dbReference type="PDBsum" id="2Q3U"/>
<dbReference type="PDBsum" id="3H7C"/>
<dbReference type="PDBsum" id="3H7K"/>
<dbReference type="SMR" id="Q8GWW7"/>
<dbReference type="FunCoup" id="Q8GWW7">
    <property type="interactions" value="177"/>
</dbReference>
<dbReference type="STRING" id="3702.Q8GWW7"/>
<dbReference type="iPTMnet" id="Q8GWW7"/>
<dbReference type="PaxDb" id="3702-AT5G08170.1"/>
<dbReference type="ProteomicsDB" id="244936"/>
<dbReference type="DNASU" id="830713"/>
<dbReference type="EnsemblPlants" id="AT5G08170.1">
    <property type="protein sequence ID" value="AT5G08170.1"/>
    <property type="gene ID" value="AT5G08170"/>
</dbReference>
<dbReference type="GeneID" id="830713"/>
<dbReference type="Gramene" id="AT5G08170.1">
    <property type="protein sequence ID" value="AT5G08170.1"/>
    <property type="gene ID" value="AT5G08170"/>
</dbReference>
<dbReference type="KEGG" id="ath:AT5G08170"/>
<dbReference type="Araport" id="AT5G08170"/>
<dbReference type="TAIR" id="AT5G08170">
    <property type="gene designation" value="EMB1873"/>
</dbReference>
<dbReference type="eggNOG" id="ENOG502QUHM">
    <property type="taxonomic scope" value="Eukaryota"/>
</dbReference>
<dbReference type="HOGENOM" id="CLU_037682_1_0_1"/>
<dbReference type="InParanoid" id="Q8GWW7"/>
<dbReference type="OMA" id="IGVDCNT"/>
<dbReference type="OrthoDB" id="544103at2759"/>
<dbReference type="PhylomeDB" id="Q8GWW7"/>
<dbReference type="BioCyc" id="MetaCyc:MONOMER-2641"/>
<dbReference type="UniPathway" id="UPA00534">
    <property type="reaction ID" value="UER00285"/>
</dbReference>
<dbReference type="EvolutionaryTrace" id="Q8GWW7"/>
<dbReference type="PRO" id="PR:Q8GWW7"/>
<dbReference type="Proteomes" id="UP000006548">
    <property type="component" value="Chromosome 5"/>
</dbReference>
<dbReference type="ExpressionAtlas" id="Q8GWW7">
    <property type="expression patterns" value="baseline and differential"/>
</dbReference>
<dbReference type="GO" id="GO:0047632">
    <property type="term" value="F:agmatine deiminase activity"/>
    <property type="evidence" value="ECO:0000314"/>
    <property type="project" value="TAIR"/>
</dbReference>
<dbReference type="GO" id="GO:0004668">
    <property type="term" value="F:protein-arginine deiminase activity"/>
    <property type="evidence" value="ECO:0007669"/>
    <property type="project" value="InterPro"/>
</dbReference>
<dbReference type="GO" id="GO:0006596">
    <property type="term" value="P:polyamine biosynthetic process"/>
    <property type="evidence" value="ECO:0000314"/>
    <property type="project" value="TAIR"/>
</dbReference>
<dbReference type="GO" id="GO:0033388">
    <property type="term" value="P:putrescine biosynthetic process from arginine"/>
    <property type="evidence" value="ECO:0007669"/>
    <property type="project" value="UniProtKB-UniPathway"/>
</dbReference>
<dbReference type="FunFam" id="3.75.10.10:FF:000012">
    <property type="entry name" value="Agmatine deiminase"/>
    <property type="match status" value="1"/>
</dbReference>
<dbReference type="Gene3D" id="3.75.10.10">
    <property type="entry name" value="L-arginine/glycine Amidinotransferase, Chain A"/>
    <property type="match status" value="1"/>
</dbReference>
<dbReference type="HAMAP" id="MF_01841">
    <property type="entry name" value="Agmatine_deimin"/>
    <property type="match status" value="1"/>
</dbReference>
<dbReference type="InterPro" id="IPR017754">
    <property type="entry name" value="Agmatine_deiminase"/>
</dbReference>
<dbReference type="InterPro" id="IPR007466">
    <property type="entry name" value="Peptidyl-Arg-deiminase_porph"/>
</dbReference>
<dbReference type="NCBIfam" id="TIGR03380">
    <property type="entry name" value="agmatine_aguA"/>
    <property type="match status" value="1"/>
</dbReference>
<dbReference type="NCBIfam" id="NF010070">
    <property type="entry name" value="PRK13551.1"/>
    <property type="match status" value="1"/>
</dbReference>
<dbReference type="PANTHER" id="PTHR31377:SF2">
    <property type="entry name" value="AGMATINE DEIMINASE"/>
    <property type="match status" value="1"/>
</dbReference>
<dbReference type="PANTHER" id="PTHR31377">
    <property type="entry name" value="AGMATINE DEIMINASE-RELATED"/>
    <property type="match status" value="1"/>
</dbReference>
<dbReference type="Pfam" id="PF04371">
    <property type="entry name" value="PAD_porph"/>
    <property type="match status" value="1"/>
</dbReference>
<dbReference type="SUPFAM" id="SSF55909">
    <property type="entry name" value="Pentein"/>
    <property type="match status" value="1"/>
</dbReference>